<feature type="chain" id="PRO_0000144993" description="Carbamoyl phosphate synthase large chain">
    <location>
        <begin position="1"/>
        <end position="1162"/>
    </location>
</feature>
<feature type="domain" description="ATP-grasp 1" evidence="1">
    <location>
        <begin position="186"/>
        <end position="381"/>
    </location>
</feature>
<feature type="domain" description="ATP-grasp 2" evidence="1">
    <location>
        <begin position="742"/>
        <end position="954"/>
    </location>
</feature>
<feature type="domain" description="MGS-like" evidence="1">
    <location>
        <begin position="1026"/>
        <end position="1162"/>
    </location>
</feature>
<feature type="region of interest" description="Carboxyphosphate synthetic domain" evidence="1">
    <location>
        <begin position="1"/>
        <end position="456"/>
    </location>
</feature>
<feature type="region of interest" description="Oligomerization domain" evidence="1">
    <location>
        <begin position="457"/>
        <end position="613"/>
    </location>
</feature>
<feature type="region of interest" description="Carbamoyl phosphate synthetic domain" evidence="1">
    <location>
        <begin position="614"/>
        <end position="1025"/>
    </location>
</feature>
<feature type="region of interest" description="Allosteric domain" evidence="1">
    <location>
        <begin position="1026"/>
        <end position="1162"/>
    </location>
</feature>
<feature type="binding site" evidence="1">
    <location>
        <position position="129"/>
    </location>
    <ligand>
        <name>ATP</name>
        <dbReference type="ChEBI" id="CHEBI:30616"/>
        <label>1</label>
    </ligand>
</feature>
<feature type="binding site" evidence="1">
    <location>
        <position position="222"/>
    </location>
    <ligand>
        <name>ATP</name>
        <dbReference type="ChEBI" id="CHEBI:30616"/>
        <label>1</label>
    </ligand>
</feature>
<feature type="binding site" evidence="1">
    <location>
        <position position="228"/>
    </location>
    <ligand>
        <name>ATP</name>
        <dbReference type="ChEBI" id="CHEBI:30616"/>
        <label>1</label>
    </ligand>
</feature>
<feature type="binding site" evidence="1">
    <location>
        <position position="229"/>
    </location>
    <ligand>
        <name>ATP</name>
        <dbReference type="ChEBI" id="CHEBI:30616"/>
        <label>1</label>
    </ligand>
</feature>
<feature type="binding site" evidence="1">
    <location>
        <position position="261"/>
    </location>
    <ligand>
        <name>ATP</name>
        <dbReference type="ChEBI" id="CHEBI:30616"/>
        <label>1</label>
    </ligand>
</feature>
<feature type="binding site" evidence="1">
    <location>
        <position position="263"/>
    </location>
    <ligand>
        <name>ATP</name>
        <dbReference type="ChEBI" id="CHEBI:30616"/>
        <label>1</label>
    </ligand>
</feature>
<feature type="binding site" evidence="1">
    <location>
        <position position="268"/>
    </location>
    <ligand>
        <name>ATP</name>
        <dbReference type="ChEBI" id="CHEBI:30616"/>
        <label>1</label>
    </ligand>
</feature>
<feature type="binding site" evidence="1">
    <location>
        <position position="294"/>
    </location>
    <ligand>
        <name>ATP</name>
        <dbReference type="ChEBI" id="CHEBI:30616"/>
        <label>1</label>
    </ligand>
</feature>
<feature type="binding site" evidence="1">
    <location>
        <position position="295"/>
    </location>
    <ligand>
        <name>ATP</name>
        <dbReference type="ChEBI" id="CHEBI:30616"/>
        <label>1</label>
    </ligand>
</feature>
<feature type="binding site" evidence="1">
    <location>
        <position position="296"/>
    </location>
    <ligand>
        <name>ATP</name>
        <dbReference type="ChEBI" id="CHEBI:30616"/>
        <label>1</label>
    </ligand>
</feature>
<feature type="binding site" evidence="1">
    <location>
        <position position="338"/>
    </location>
    <ligand>
        <name>ATP</name>
        <dbReference type="ChEBI" id="CHEBI:30616"/>
        <label>1</label>
    </ligand>
</feature>
<feature type="binding site" evidence="1">
    <location>
        <position position="338"/>
    </location>
    <ligand>
        <name>Mg(2+)</name>
        <dbReference type="ChEBI" id="CHEBI:18420"/>
        <label>1</label>
    </ligand>
</feature>
<feature type="binding site" evidence="1">
    <location>
        <position position="338"/>
    </location>
    <ligand>
        <name>Mn(2+)</name>
        <dbReference type="ChEBI" id="CHEBI:29035"/>
        <label>1</label>
    </ligand>
</feature>
<feature type="binding site" evidence="1">
    <location>
        <position position="352"/>
    </location>
    <ligand>
        <name>ATP</name>
        <dbReference type="ChEBI" id="CHEBI:30616"/>
        <label>1</label>
    </ligand>
</feature>
<feature type="binding site" evidence="1">
    <location>
        <position position="352"/>
    </location>
    <ligand>
        <name>Mg(2+)</name>
        <dbReference type="ChEBI" id="CHEBI:18420"/>
        <label>1</label>
    </ligand>
</feature>
<feature type="binding site" evidence="1">
    <location>
        <position position="352"/>
    </location>
    <ligand>
        <name>Mg(2+)</name>
        <dbReference type="ChEBI" id="CHEBI:18420"/>
        <label>2</label>
    </ligand>
</feature>
<feature type="binding site" evidence="1">
    <location>
        <position position="352"/>
    </location>
    <ligand>
        <name>Mn(2+)</name>
        <dbReference type="ChEBI" id="CHEBI:29035"/>
        <label>1</label>
    </ligand>
</feature>
<feature type="binding site" evidence="1">
    <location>
        <position position="352"/>
    </location>
    <ligand>
        <name>Mn(2+)</name>
        <dbReference type="ChEBI" id="CHEBI:29035"/>
        <label>2</label>
    </ligand>
</feature>
<feature type="binding site" evidence="1">
    <location>
        <position position="354"/>
    </location>
    <ligand>
        <name>Mg(2+)</name>
        <dbReference type="ChEBI" id="CHEBI:18420"/>
        <label>2</label>
    </ligand>
</feature>
<feature type="binding site" evidence="1">
    <location>
        <position position="354"/>
    </location>
    <ligand>
        <name>Mn(2+)</name>
        <dbReference type="ChEBI" id="CHEBI:29035"/>
        <label>2</label>
    </ligand>
</feature>
<feature type="binding site" evidence="1">
    <location>
        <position position="778"/>
    </location>
    <ligand>
        <name>ATP</name>
        <dbReference type="ChEBI" id="CHEBI:30616"/>
        <label>2</label>
    </ligand>
</feature>
<feature type="binding site" evidence="1">
    <location>
        <position position="838"/>
    </location>
    <ligand>
        <name>ATP</name>
        <dbReference type="ChEBI" id="CHEBI:30616"/>
        <label>2</label>
    </ligand>
</feature>
<feature type="binding site" evidence="1">
    <location>
        <position position="840"/>
    </location>
    <ligand>
        <name>ATP</name>
        <dbReference type="ChEBI" id="CHEBI:30616"/>
        <label>2</label>
    </ligand>
</feature>
<feature type="binding site" evidence="1">
    <location>
        <position position="845"/>
    </location>
    <ligand>
        <name>ATP</name>
        <dbReference type="ChEBI" id="CHEBI:30616"/>
        <label>2</label>
    </ligand>
</feature>
<feature type="binding site" evidence="1">
    <location>
        <position position="870"/>
    </location>
    <ligand>
        <name>ATP</name>
        <dbReference type="ChEBI" id="CHEBI:30616"/>
        <label>2</label>
    </ligand>
</feature>
<feature type="binding site" evidence="1">
    <location>
        <position position="871"/>
    </location>
    <ligand>
        <name>ATP</name>
        <dbReference type="ChEBI" id="CHEBI:30616"/>
        <label>2</label>
    </ligand>
</feature>
<feature type="binding site" evidence="1">
    <location>
        <position position="872"/>
    </location>
    <ligand>
        <name>ATP</name>
        <dbReference type="ChEBI" id="CHEBI:30616"/>
        <label>2</label>
    </ligand>
</feature>
<feature type="binding site" evidence="1">
    <location>
        <position position="873"/>
    </location>
    <ligand>
        <name>ATP</name>
        <dbReference type="ChEBI" id="CHEBI:30616"/>
        <label>2</label>
    </ligand>
</feature>
<feature type="binding site" evidence="1">
    <location>
        <position position="913"/>
    </location>
    <ligand>
        <name>ATP</name>
        <dbReference type="ChEBI" id="CHEBI:30616"/>
        <label>2</label>
    </ligand>
</feature>
<feature type="binding site" evidence="1">
    <location>
        <position position="913"/>
    </location>
    <ligand>
        <name>Mg(2+)</name>
        <dbReference type="ChEBI" id="CHEBI:18420"/>
        <label>3</label>
    </ligand>
</feature>
<feature type="binding site" evidence="1">
    <location>
        <position position="913"/>
    </location>
    <ligand>
        <name>Mn(2+)</name>
        <dbReference type="ChEBI" id="CHEBI:29035"/>
        <label>3</label>
    </ligand>
</feature>
<feature type="binding site" evidence="1">
    <location>
        <position position="925"/>
    </location>
    <ligand>
        <name>ATP</name>
        <dbReference type="ChEBI" id="CHEBI:30616"/>
        <label>2</label>
    </ligand>
</feature>
<feature type="binding site" evidence="1">
    <location>
        <position position="925"/>
    </location>
    <ligand>
        <name>Mg(2+)</name>
        <dbReference type="ChEBI" id="CHEBI:18420"/>
        <label>3</label>
    </ligand>
</feature>
<feature type="binding site" evidence="1">
    <location>
        <position position="925"/>
    </location>
    <ligand>
        <name>Mg(2+)</name>
        <dbReference type="ChEBI" id="CHEBI:18420"/>
        <label>4</label>
    </ligand>
</feature>
<feature type="binding site" evidence="1">
    <location>
        <position position="925"/>
    </location>
    <ligand>
        <name>Mn(2+)</name>
        <dbReference type="ChEBI" id="CHEBI:29035"/>
        <label>3</label>
    </ligand>
</feature>
<feature type="binding site" evidence="1">
    <location>
        <position position="925"/>
    </location>
    <ligand>
        <name>Mn(2+)</name>
        <dbReference type="ChEBI" id="CHEBI:29035"/>
        <label>4</label>
    </ligand>
</feature>
<feature type="binding site" evidence="1">
    <location>
        <position position="927"/>
    </location>
    <ligand>
        <name>Mg(2+)</name>
        <dbReference type="ChEBI" id="CHEBI:18420"/>
        <label>4</label>
    </ligand>
</feature>
<feature type="binding site" evidence="1">
    <location>
        <position position="927"/>
    </location>
    <ligand>
        <name>Mn(2+)</name>
        <dbReference type="ChEBI" id="CHEBI:29035"/>
        <label>4</label>
    </ligand>
</feature>
<gene>
    <name evidence="1" type="primary">carB</name>
    <name type="ordered locus">BMEI0522</name>
</gene>
<dbReference type="EC" id="6.3.4.16" evidence="1"/>
<dbReference type="EC" id="6.3.5.5" evidence="1"/>
<dbReference type="EMBL" id="AE008917">
    <property type="protein sequence ID" value="AAL51703.1"/>
    <property type="molecule type" value="Genomic_DNA"/>
</dbReference>
<dbReference type="PIR" id="AD3317">
    <property type="entry name" value="AD3317"/>
</dbReference>
<dbReference type="RefSeq" id="WP_004684046.1">
    <property type="nucleotide sequence ID" value="NZ_GG703780.1"/>
</dbReference>
<dbReference type="SMR" id="Q8YIC2"/>
<dbReference type="GeneID" id="29593304"/>
<dbReference type="KEGG" id="bme:BMEI0522"/>
<dbReference type="KEGG" id="bmel:DK63_902"/>
<dbReference type="PATRIC" id="fig|224914.52.peg.947"/>
<dbReference type="eggNOG" id="COG0458">
    <property type="taxonomic scope" value="Bacteria"/>
</dbReference>
<dbReference type="PhylomeDB" id="Q8YIC2"/>
<dbReference type="UniPathway" id="UPA00068">
    <property type="reaction ID" value="UER00171"/>
</dbReference>
<dbReference type="UniPathway" id="UPA00070">
    <property type="reaction ID" value="UER00115"/>
</dbReference>
<dbReference type="Proteomes" id="UP000000419">
    <property type="component" value="Chromosome I"/>
</dbReference>
<dbReference type="GO" id="GO:0005737">
    <property type="term" value="C:cytoplasm"/>
    <property type="evidence" value="ECO:0007669"/>
    <property type="project" value="TreeGrafter"/>
</dbReference>
<dbReference type="GO" id="GO:0005524">
    <property type="term" value="F:ATP binding"/>
    <property type="evidence" value="ECO:0007669"/>
    <property type="project" value="UniProtKB-UniRule"/>
</dbReference>
<dbReference type="GO" id="GO:0004087">
    <property type="term" value="F:carbamoyl-phosphate synthase (ammonia) activity"/>
    <property type="evidence" value="ECO:0007669"/>
    <property type="project" value="RHEA"/>
</dbReference>
<dbReference type="GO" id="GO:0004088">
    <property type="term" value="F:carbamoyl-phosphate synthase (glutamine-hydrolyzing) activity"/>
    <property type="evidence" value="ECO:0007669"/>
    <property type="project" value="UniProtKB-UniRule"/>
</dbReference>
<dbReference type="GO" id="GO:0046872">
    <property type="term" value="F:metal ion binding"/>
    <property type="evidence" value="ECO:0007669"/>
    <property type="project" value="UniProtKB-KW"/>
</dbReference>
<dbReference type="GO" id="GO:0044205">
    <property type="term" value="P:'de novo' UMP biosynthetic process"/>
    <property type="evidence" value="ECO:0007669"/>
    <property type="project" value="UniProtKB-UniRule"/>
</dbReference>
<dbReference type="GO" id="GO:0006541">
    <property type="term" value="P:glutamine metabolic process"/>
    <property type="evidence" value="ECO:0007669"/>
    <property type="project" value="TreeGrafter"/>
</dbReference>
<dbReference type="GO" id="GO:0006526">
    <property type="term" value="P:L-arginine biosynthetic process"/>
    <property type="evidence" value="ECO:0007669"/>
    <property type="project" value="UniProtKB-UniRule"/>
</dbReference>
<dbReference type="CDD" id="cd01424">
    <property type="entry name" value="MGS_CPS_II"/>
    <property type="match status" value="1"/>
</dbReference>
<dbReference type="FunFam" id="1.10.1030.10:FF:000002">
    <property type="entry name" value="Carbamoyl-phosphate synthase large chain"/>
    <property type="match status" value="1"/>
</dbReference>
<dbReference type="FunFam" id="3.30.470.20:FF:000007">
    <property type="entry name" value="Carbamoyl-phosphate synthase large chain"/>
    <property type="match status" value="1"/>
</dbReference>
<dbReference type="FunFam" id="3.30.470.20:FF:000013">
    <property type="entry name" value="Carbamoyl-phosphate synthase large chain"/>
    <property type="match status" value="1"/>
</dbReference>
<dbReference type="FunFam" id="3.40.50.20:FF:000001">
    <property type="entry name" value="Carbamoyl-phosphate synthase large chain"/>
    <property type="match status" value="1"/>
</dbReference>
<dbReference type="FunFam" id="3.40.50.20:FF:000003">
    <property type="entry name" value="Carbamoyl-phosphate synthase large chain"/>
    <property type="match status" value="1"/>
</dbReference>
<dbReference type="Gene3D" id="3.40.50.20">
    <property type="match status" value="2"/>
</dbReference>
<dbReference type="Gene3D" id="3.30.470.20">
    <property type="entry name" value="ATP-grasp fold, B domain"/>
    <property type="match status" value="2"/>
</dbReference>
<dbReference type="Gene3D" id="1.10.1030.10">
    <property type="entry name" value="Carbamoyl-phosphate synthetase, large subunit oligomerisation domain"/>
    <property type="match status" value="1"/>
</dbReference>
<dbReference type="Gene3D" id="3.40.50.1380">
    <property type="entry name" value="Methylglyoxal synthase-like domain"/>
    <property type="match status" value="1"/>
</dbReference>
<dbReference type="HAMAP" id="MF_01210_B">
    <property type="entry name" value="CPSase_L_chain_B"/>
    <property type="match status" value="1"/>
</dbReference>
<dbReference type="InterPro" id="IPR011761">
    <property type="entry name" value="ATP-grasp"/>
</dbReference>
<dbReference type="InterPro" id="IPR006275">
    <property type="entry name" value="CarbamoylP_synth_lsu"/>
</dbReference>
<dbReference type="InterPro" id="IPR005480">
    <property type="entry name" value="CarbamoylP_synth_lsu_oligo"/>
</dbReference>
<dbReference type="InterPro" id="IPR036897">
    <property type="entry name" value="CarbamoylP_synth_lsu_oligo_sf"/>
</dbReference>
<dbReference type="InterPro" id="IPR005479">
    <property type="entry name" value="CbamoylP_synth_lsu-like_ATP-bd"/>
</dbReference>
<dbReference type="InterPro" id="IPR005483">
    <property type="entry name" value="CbamoylP_synth_lsu_CPSase_dom"/>
</dbReference>
<dbReference type="InterPro" id="IPR011607">
    <property type="entry name" value="MGS-like_dom"/>
</dbReference>
<dbReference type="InterPro" id="IPR036914">
    <property type="entry name" value="MGS-like_dom_sf"/>
</dbReference>
<dbReference type="InterPro" id="IPR033937">
    <property type="entry name" value="MGS_CPS_CarB"/>
</dbReference>
<dbReference type="InterPro" id="IPR016185">
    <property type="entry name" value="PreATP-grasp_dom_sf"/>
</dbReference>
<dbReference type="NCBIfam" id="TIGR01369">
    <property type="entry name" value="CPSaseII_lrg"/>
    <property type="match status" value="1"/>
</dbReference>
<dbReference type="NCBIfam" id="NF003671">
    <property type="entry name" value="PRK05294.1"/>
    <property type="match status" value="1"/>
</dbReference>
<dbReference type="NCBIfam" id="NF009455">
    <property type="entry name" value="PRK12815.1"/>
    <property type="match status" value="1"/>
</dbReference>
<dbReference type="PANTHER" id="PTHR11405:SF53">
    <property type="entry name" value="CARBAMOYL-PHOSPHATE SYNTHASE [AMMONIA], MITOCHONDRIAL"/>
    <property type="match status" value="1"/>
</dbReference>
<dbReference type="PANTHER" id="PTHR11405">
    <property type="entry name" value="CARBAMOYLTRANSFERASE FAMILY MEMBER"/>
    <property type="match status" value="1"/>
</dbReference>
<dbReference type="Pfam" id="PF02786">
    <property type="entry name" value="CPSase_L_D2"/>
    <property type="match status" value="2"/>
</dbReference>
<dbReference type="Pfam" id="PF02787">
    <property type="entry name" value="CPSase_L_D3"/>
    <property type="match status" value="1"/>
</dbReference>
<dbReference type="Pfam" id="PF02142">
    <property type="entry name" value="MGS"/>
    <property type="match status" value="1"/>
</dbReference>
<dbReference type="PRINTS" id="PR00098">
    <property type="entry name" value="CPSASE"/>
</dbReference>
<dbReference type="SMART" id="SM01096">
    <property type="entry name" value="CPSase_L_D3"/>
    <property type="match status" value="1"/>
</dbReference>
<dbReference type="SMART" id="SM00851">
    <property type="entry name" value="MGS"/>
    <property type="match status" value="1"/>
</dbReference>
<dbReference type="SUPFAM" id="SSF48108">
    <property type="entry name" value="Carbamoyl phosphate synthetase, large subunit connection domain"/>
    <property type="match status" value="1"/>
</dbReference>
<dbReference type="SUPFAM" id="SSF56059">
    <property type="entry name" value="Glutathione synthetase ATP-binding domain-like"/>
    <property type="match status" value="2"/>
</dbReference>
<dbReference type="SUPFAM" id="SSF52335">
    <property type="entry name" value="Methylglyoxal synthase-like"/>
    <property type="match status" value="1"/>
</dbReference>
<dbReference type="SUPFAM" id="SSF52440">
    <property type="entry name" value="PreATP-grasp domain"/>
    <property type="match status" value="2"/>
</dbReference>
<dbReference type="PROSITE" id="PS50975">
    <property type="entry name" value="ATP_GRASP"/>
    <property type="match status" value="2"/>
</dbReference>
<dbReference type="PROSITE" id="PS00866">
    <property type="entry name" value="CPSASE_1"/>
    <property type="match status" value="1"/>
</dbReference>
<dbReference type="PROSITE" id="PS00867">
    <property type="entry name" value="CPSASE_2"/>
    <property type="match status" value="2"/>
</dbReference>
<dbReference type="PROSITE" id="PS51855">
    <property type="entry name" value="MGS"/>
    <property type="match status" value="1"/>
</dbReference>
<evidence type="ECO:0000255" key="1">
    <source>
        <dbReference type="HAMAP-Rule" id="MF_01210"/>
    </source>
</evidence>
<name>CARB_BRUME</name>
<proteinExistence type="inferred from homology"/>
<protein>
    <recommendedName>
        <fullName evidence="1">Carbamoyl phosphate synthase large chain</fullName>
        <ecNumber evidence="1">6.3.4.16</ecNumber>
        <ecNumber evidence="1">6.3.5.5</ecNumber>
    </recommendedName>
    <alternativeName>
        <fullName evidence="1">Carbamoyl phosphate synthetase ammonia chain</fullName>
    </alternativeName>
</protein>
<comment type="function">
    <text evidence="1">Large subunit of the glutamine-dependent carbamoyl phosphate synthetase (CPSase). CPSase catalyzes the formation of carbamoyl phosphate from the ammonia moiety of glutamine, carbonate, and phosphate donated by ATP, constituting the first step of 2 biosynthetic pathways, one leading to arginine and/or urea and the other to pyrimidine nucleotides. The large subunit (synthetase) binds the substrates ammonia (free or transferred from glutamine from the small subunit), hydrogencarbonate and ATP and carries out an ATP-coupled ligase reaction, activating hydrogencarbonate by forming carboxy phosphate which reacts with ammonia to form carbamoyl phosphate.</text>
</comment>
<comment type="catalytic activity">
    <reaction evidence="1">
        <text>hydrogencarbonate + L-glutamine + 2 ATP + H2O = carbamoyl phosphate + L-glutamate + 2 ADP + phosphate + 2 H(+)</text>
        <dbReference type="Rhea" id="RHEA:18633"/>
        <dbReference type="ChEBI" id="CHEBI:15377"/>
        <dbReference type="ChEBI" id="CHEBI:15378"/>
        <dbReference type="ChEBI" id="CHEBI:17544"/>
        <dbReference type="ChEBI" id="CHEBI:29985"/>
        <dbReference type="ChEBI" id="CHEBI:30616"/>
        <dbReference type="ChEBI" id="CHEBI:43474"/>
        <dbReference type="ChEBI" id="CHEBI:58228"/>
        <dbReference type="ChEBI" id="CHEBI:58359"/>
        <dbReference type="ChEBI" id="CHEBI:456216"/>
        <dbReference type="EC" id="6.3.5.5"/>
    </reaction>
</comment>
<comment type="catalytic activity">
    <molecule>Carbamoyl phosphate synthase large chain</molecule>
    <reaction evidence="1">
        <text>hydrogencarbonate + NH4(+) + 2 ATP = carbamoyl phosphate + 2 ADP + phosphate + 2 H(+)</text>
        <dbReference type="Rhea" id="RHEA:18029"/>
        <dbReference type="ChEBI" id="CHEBI:15378"/>
        <dbReference type="ChEBI" id="CHEBI:17544"/>
        <dbReference type="ChEBI" id="CHEBI:28938"/>
        <dbReference type="ChEBI" id="CHEBI:30616"/>
        <dbReference type="ChEBI" id="CHEBI:43474"/>
        <dbReference type="ChEBI" id="CHEBI:58228"/>
        <dbReference type="ChEBI" id="CHEBI:456216"/>
        <dbReference type="EC" id="6.3.4.16"/>
    </reaction>
</comment>
<comment type="cofactor">
    <cofactor evidence="1">
        <name>Mg(2+)</name>
        <dbReference type="ChEBI" id="CHEBI:18420"/>
    </cofactor>
    <cofactor evidence="1">
        <name>Mn(2+)</name>
        <dbReference type="ChEBI" id="CHEBI:29035"/>
    </cofactor>
    <text evidence="1">Binds 4 Mg(2+) or Mn(2+) ions per subunit.</text>
</comment>
<comment type="pathway">
    <text evidence="1">Amino-acid biosynthesis; L-arginine biosynthesis; carbamoyl phosphate from bicarbonate: step 1/1.</text>
</comment>
<comment type="pathway">
    <text evidence="1">Pyrimidine metabolism; UMP biosynthesis via de novo pathway; (S)-dihydroorotate from bicarbonate: step 1/3.</text>
</comment>
<comment type="subunit">
    <text evidence="1">Composed of two chains; the small (or glutamine) chain promotes the hydrolysis of glutamine to ammonia, which is used by the large (or ammonia) chain to synthesize carbamoyl phosphate. Tetramer of heterodimers (alpha,beta)4.</text>
</comment>
<comment type="domain">
    <text evidence="1">The large subunit is composed of 2 ATP-grasp domains that are involved in binding the 2 ATP molecules needed for carbamoyl phosphate synthesis. The N-terminal ATP-grasp domain (referred to as the carboxyphosphate synthetic component) catalyzes the ATP-dependent phosphorylation of hydrogencarbonate to carboxyphosphate and the subsequent nucleophilic attack by ammonia to form a carbamate intermediate. The C-terminal ATP-grasp domain (referred to as the carbamoyl phosphate synthetic component) then catalyzes the phosphorylation of carbamate with the second ATP to form the end product carbamoyl phosphate. The reactive and unstable enzyme intermediates are sequentially channeled from one active site to the next through the interior of the protein over a distance of at least 96 A.</text>
</comment>
<comment type="similarity">
    <text evidence="1">Belongs to the CarB family.</text>
</comment>
<sequence length="1162" mass="126360">MPKRTDIKSILIIGAGPIVIGQACEFDYSGTQACKALKEEGYRIILVNSNPATIMTDPDLADATYIEPITPEVVAKIIAKERPDAILPTMGGQTALNTALSLRRMGVLERYNVEMIGAKAEAIDKAEDRALFREAMKKIGLDTPGSMFANATEIKDEDRKRHEVKRAEVKAQFSGDELDKALDKLETEWQLGEVERKQRYMSHALAKAAQALDVVGLPAIIRPSFTLGGTGGGIAYNRQEFFEIIERGLDASPTTEVLIEESVLGWKEYEMEVVRDHADNCIIICSIENLDPMGVHTGDSITVAPALTLTDKEYQIMRNASIAVLREIGVETGGSNVQFAINPANGRMIVIEMNPRVSRSSALASKATGFPIAKVAAKLAVGYTLDELDNDITGGATPASFEPSIDYVVTKIPRFAFEKFPGSSPILTTAMKSVGEVMAIGRTFQESLQKALRGLETGLTGFDEIAIPNIEEGDEKNAIRAAIGTPTPDRLRMVAQAMRLGLSVEQVHDASKIDPWFLEQIESIVKTEERIREHGLPQDAENLRMLKAMGFSDARLASLTAKDAEDVAKLRADLDVHPVYKRIDTCAAEFASPTAYMYSTYETPFVGQPRSEAEVSDRKKVVILGGGPNRIGQGIEFDYCCCHAAFALGDADYEAIMVNCNPETVSTDYDTSDRLYFEPLTAEDVLEILRVEKQKGTLHGVIVQFGGQTPLKLANALEKAGIPILGTSPDAIDLAEDRDRFQKLLIKLDLNQPKNGIAYSVEQARLVAADLGFPLVVRPSYVLGGRAMQIIHDERGLQAYLLDTVPELVPEDIKAKYPNDKTGQINTLLGKNPLLFDTYLTEAIEVDVDCLCDGKDSLVAGIMEHIEEAGIHSGDSACLLPVHTLSPEIVAELERQTAALATALHVGGLMNVQFAIKDGEIFILEVNPRASRTVPFVAKTVGTPIAKVAARIMAGESLEAAFDAYGGKPQPTARPHIAVKEAVFPFARFPGVDTLLGPEMRSTGEVMGLDYDYALAFAKAQLGAGVELPREGTVFVSVRDEDKERVLGPVRKLASIGFKVMATGGTQKFLEANGVESTKINKVIEGRPHVEDAIRNRQIHLVFNTTDSASAVSDSKSIRRATLMQKLPYYTTMAGAESAAEAIAALKAGSLEVRPLQDYFRS</sequence>
<keyword id="KW-0028">Amino-acid biosynthesis</keyword>
<keyword id="KW-0055">Arginine biosynthesis</keyword>
<keyword id="KW-0067">ATP-binding</keyword>
<keyword id="KW-0436">Ligase</keyword>
<keyword id="KW-0460">Magnesium</keyword>
<keyword id="KW-0464">Manganese</keyword>
<keyword id="KW-0479">Metal-binding</keyword>
<keyword id="KW-0547">Nucleotide-binding</keyword>
<keyword id="KW-0665">Pyrimidine biosynthesis</keyword>
<keyword id="KW-0677">Repeat</keyword>
<organism>
    <name type="scientific">Brucella melitensis biotype 1 (strain ATCC 23456 / CCUG 17765 / NCTC 10094 / 16M)</name>
    <dbReference type="NCBI Taxonomy" id="224914"/>
    <lineage>
        <taxon>Bacteria</taxon>
        <taxon>Pseudomonadati</taxon>
        <taxon>Pseudomonadota</taxon>
        <taxon>Alphaproteobacteria</taxon>
        <taxon>Hyphomicrobiales</taxon>
        <taxon>Brucellaceae</taxon>
        <taxon>Brucella/Ochrobactrum group</taxon>
        <taxon>Brucella</taxon>
    </lineage>
</organism>
<accession>Q8YIC2</accession>
<reference key="1">
    <citation type="journal article" date="2002" name="Proc. Natl. Acad. Sci. U.S.A.">
        <title>The genome sequence of the facultative intracellular pathogen Brucella melitensis.</title>
        <authorList>
            <person name="DelVecchio V.G."/>
            <person name="Kapatral V."/>
            <person name="Redkar R.J."/>
            <person name="Patra G."/>
            <person name="Mujer C."/>
            <person name="Los T."/>
            <person name="Ivanova N."/>
            <person name="Anderson I."/>
            <person name="Bhattacharyya A."/>
            <person name="Lykidis A."/>
            <person name="Reznik G."/>
            <person name="Jablonski L."/>
            <person name="Larsen N."/>
            <person name="D'Souza M."/>
            <person name="Bernal A."/>
            <person name="Mazur M."/>
            <person name="Goltsman E."/>
            <person name="Selkov E."/>
            <person name="Elzer P.H."/>
            <person name="Hagius S."/>
            <person name="O'Callaghan D."/>
            <person name="Letesson J.-J."/>
            <person name="Haselkorn R."/>
            <person name="Kyrpides N.C."/>
            <person name="Overbeek R."/>
        </authorList>
    </citation>
    <scope>NUCLEOTIDE SEQUENCE [LARGE SCALE GENOMIC DNA]</scope>
    <source>
        <strain>ATCC 23456 / CCUG 17765 / NCTC 10094 / 16M</strain>
    </source>
</reference>